<gene>
    <name evidence="1" type="primary">guaA</name>
    <name type="ordered locus">SaurJH9_0438</name>
</gene>
<dbReference type="EC" id="6.3.5.2" evidence="1"/>
<dbReference type="EMBL" id="CP000703">
    <property type="protein sequence ID" value="ABQ48243.1"/>
    <property type="molecule type" value="Genomic_DNA"/>
</dbReference>
<dbReference type="RefSeq" id="WP_000424963.1">
    <property type="nucleotide sequence ID" value="NC_009487.1"/>
</dbReference>
<dbReference type="SMR" id="A5IPX0"/>
<dbReference type="MEROPS" id="C26.957"/>
<dbReference type="GeneID" id="98344714"/>
<dbReference type="KEGG" id="saj:SaurJH9_0438"/>
<dbReference type="HOGENOM" id="CLU_014340_0_5_9"/>
<dbReference type="UniPathway" id="UPA00189">
    <property type="reaction ID" value="UER00296"/>
</dbReference>
<dbReference type="GO" id="GO:0005829">
    <property type="term" value="C:cytosol"/>
    <property type="evidence" value="ECO:0007669"/>
    <property type="project" value="TreeGrafter"/>
</dbReference>
<dbReference type="GO" id="GO:0005524">
    <property type="term" value="F:ATP binding"/>
    <property type="evidence" value="ECO:0007669"/>
    <property type="project" value="UniProtKB-UniRule"/>
</dbReference>
<dbReference type="GO" id="GO:0003921">
    <property type="term" value="F:GMP synthase activity"/>
    <property type="evidence" value="ECO:0007669"/>
    <property type="project" value="InterPro"/>
</dbReference>
<dbReference type="CDD" id="cd01742">
    <property type="entry name" value="GATase1_GMP_Synthase"/>
    <property type="match status" value="1"/>
</dbReference>
<dbReference type="CDD" id="cd01997">
    <property type="entry name" value="GMP_synthase_C"/>
    <property type="match status" value="1"/>
</dbReference>
<dbReference type="FunFam" id="3.30.300.10:FF:000002">
    <property type="entry name" value="GMP synthase [glutamine-hydrolyzing]"/>
    <property type="match status" value="1"/>
</dbReference>
<dbReference type="FunFam" id="3.40.50.620:FF:000001">
    <property type="entry name" value="GMP synthase [glutamine-hydrolyzing]"/>
    <property type="match status" value="1"/>
</dbReference>
<dbReference type="FunFam" id="3.40.50.880:FF:000001">
    <property type="entry name" value="GMP synthase [glutamine-hydrolyzing]"/>
    <property type="match status" value="1"/>
</dbReference>
<dbReference type="Gene3D" id="3.30.300.10">
    <property type="match status" value="1"/>
</dbReference>
<dbReference type="Gene3D" id="3.40.50.880">
    <property type="match status" value="1"/>
</dbReference>
<dbReference type="Gene3D" id="3.40.50.620">
    <property type="entry name" value="HUPs"/>
    <property type="match status" value="1"/>
</dbReference>
<dbReference type="HAMAP" id="MF_00344">
    <property type="entry name" value="GMP_synthase"/>
    <property type="match status" value="1"/>
</dbReference>
<dbReference type="InterPro" id="IPR029062">
    <property type="entry name" value="Class_I_gatase-like"/>
</dbReference>
<dbReference type="InterPro" id="IPR017926">
    <property type="entry name" value="GATASE"/>
</dbReference>
<dbReference type="InterPro" id="IPR001674">
    <property type="entry name" value="GMP_synth_C"/>
</dbReference>
<dbReference type="InterPro" id="IPR004739">
    <property type="entry name" value="GMP_synth_GATase"/>
</dbReference>
<dbReference type="InterPro" id="IPR022955">
    <property type="entry name" value="GMP_synthase"/>
</dbReference>
<dbReference type="InterPro" id="IPR025777">
    <property type="entry name" value="GMPS_ATP_PPase_dom"/>
</dbReference>
<dbReference type="InterPro" id="IPR014729">
    <property type="entry name" value="Rossmann-like_a/b/a_fold"/>
</dbReference>
<dbReference type="NCBIfam" id="TIGR00884">
    <property type="entry name" value="guaA_Cterm"/>
    <property type="match status" value="1"/>
</dbReference>
<dbReference type="NCBIfam" id="TIGR00888">
    <property type="entry name" value="guaA_Nterm"/>
    <property type="match status" value="1"/>
</dbReference>
<dbReference type="NCBIfam" id="NF000848">
    <property type="entry name" value="PRK00074.1"/>
    <property type="match status" value="1"/>
</dbReference>
<dbReference type="PANTHER" id="PTHR11922:SF2">
    <property type="entry name" value="GMP SYNTHASE [GLUTAMINE-HYDROLYZING]"/>
    <property type="match status" value="1"/>
</dbReference>
<dbReference type="PANTHER" id="PTHR11922">
    <property type="entry name" value="GMP SYNTHASE-RELATED"/>
    <property type="match status" value="1"/>
</dbReference>
<dbReference type="Pfam" id="PF00117">
    <property type="entry name" value="GATase"/>
    <property type="match status" value="1"/>
</dbReference>
<dbReference type="Pfam" id="PF00958">
    <property type="entry name" value="GMP_synt_C"/>
    <property type="match status" value="1"/>
</dbReference>
<dbReference type="Pfam" id="PF03054">
    <property type="entry name" value="tRNA_Me_trans"/>
    <property type="match status" value="1"/>
</dbReference>
<dbReference type="PRINTS" id="PR00097">
    <property type="entry name" value="ANTSNTHASEII"/>
</dbReference>
<dbReference type="PRINTS" id="PR00099">
    <property type="entry name" value="CPSGATASE"/>
</dbReference>
<dbReference type="PRINTS" id="PR00096">
    <property type="entry name" value="GATASE"/>
</dbReference>
<dbReference type="SUPFAM" id="SSF52402">
    <property type="entry name" value="Adenine nucleotide alpha hydrolases-like"/>
    <property type="match status" value="1"/>
</dbReference>
<dbReference type="SUPFAM" id="SSF52317">
    <property type="entry name" value="Class I glutamine amidotransferase-like"/>
    <property type="match status" value="1"/>
</dbReference>
<dbReference type="SUPFAM" id="SSF54810">
    <property type="entry name" value="GMP synthetase C-terminal dimerisation domain"/>
    <property type="match status" value="1"/>
</dbReference>
<dbReference type="PROSITE" id="PS51273">
    <property type="entry name" value="GATASE_TYPE_1"/>
    <property type="match status" value="1"/>
</dbReference>
<dbReference type="PROSITE" id="PS51553">
    <property type="entry name" value="GMPS_ATP_PPASE"/>
    <property type="match status" value="1"/>
</dbReference>
<organism>
    <name type="scientific">Staphylococcus aureus (strain JH9)</name>
    <dbReference type="NCBI Taxonomy" id="359786"/>
    <lineage>
        <taxon>Bacteria</taxon>
        <taxon>Bacillati</taxon>
        <taxon>Bacillota</taxon>
        <taxon>Bacilli</taxon>
        <taxon>Bacillales</taxon>
        <taxon>Staphylococcaceae</taxon>
        <taxon>Staphylococcus</taxon>
    </lineage>
</organism>
<name>GUAA_STAA9</name>
<evidence type="ECO:0000255" key="1">
    <source>
        <dbReference type="HAMAP-Rule" id="MF_00344"/>
    </source>
</evidence>
<proteinExistence type="inferred from homology"/>
<sequence>MEMAKEQELILVLDFGSQYNQLITRRIREMGVYSELHDHEISIEEIKKMNPKGIILSGGPNSVYEEGSFTIDPEIYNLGIPVLGICYGMQLTTKLLGGKVERANEREYGKAIINAKSDELFAGLPAEQTVWMSHSDKVIEIPEGFEVIADSPSTDYAAIEDKKRRIYGVQFHPEVRHTEYGNDLLNNFVRRVCDCKGQWTMENFIEIEIEKIRQRVGDRRVLCAMSGGVDSSVVAVLLHKAIGDQLTCIFVDHGLLRKGEGDMVMEQFGEGFNMNIIRVNAKDRFMNKLKGVSDPEQKRKIIGNEFVYVFDDEASKLKGVDFLAQGTLYTDVIESGTKTAQTIKSHHNVGGLPEDMEFELIEPINTLFKDEVRKLGIELGIPEHLVWRQPFPGPGLGIRVLGEITEDKLEIVRESDAILRQVIREEGLEREIWQYFTVLPNIQSVGVMGDYRTYDHTVGIRAVTSIDGMTSDFARIDWEVLQKISSRIVNEVDHVNRVVYDITSKPPSTIEWE</sequence>
<protein>
    <recommendedName>
        <fullName evidence="1">GMP synthase [glutamine-hydrolyzing]</fullName>
        <ecNumber evidence="1">6.3.5.2</ecNumber>
    </recommendedName>
    <alternativeName>
        <fullName evidence="1">GMP synthetase</fullName>
    </alternativeName>
    <alternativeName>
        <fullName evidence="1">Glutamine amidotransferase</fullName>
    </alternativeName>
</protein>
<feature type="chain" id="PRO_1000120423" description="GMP synthase [glutamine-hydrolyzing]">
    <location>
        <begin position="1"/>
        <end position="513"/>
    </location>
</feature>
<feature type="domain" description="Glutamine amidotransferase type-1" evidence="1">
    <location>
        <begin position="9"/>
        <end position="198"/>
    </location>
</feature>
<feature type="domain" description="GMPS ATP-PPase" evidence="1">
    <location>
        <begin position="199"/>
        <end position="388"/>
    </location>
</feature>
<feature type="active site" description="Nucleophile" evidence="1">
    <location>
        <position position="86"/>
    </location>
</feature>
<feature type="active site" evidence="1">
    <location>
        <position position="172"/>
    </location>
</feature>
<feature type="active site" evidence="1">
    <location>
        <position position="174"/>
    </location>
</feature>
<feature type="binding site" evidence="1">
    <location>
        <begin position="226"/>
        <end position="232"/>
    </location>
    <ligand>
        <name>ATP</name>
        <dbReference type="ChEBI" id="CHEBI:30616"/>
    </ligand>
</feature>
<comment type="function">
    <text evidence="1">Catalyzes the synthesis of GMP from XMP.</text>
</comment>
<comment type="catalytic activity">
    <reaction evidence="1">
        <text>XMP + L-glutamine + ATP + H2O = GMP + L-glutamate + AMP + diphosphate + 2 H(+)</text>
        <dbReference type="Rhea" id="RHEA:11680"/>
        <dbReference type="ChEBI" id="CHEBI:15377"/>
        <dbReference type="ChEBI" id="CHEBI:15378"/>
        <dbReference type="ChEBI" id="CHEBI:29985"/>
        <dbReference type="ChEBI" id="CHEBI:30616"/>
        <dbReference type="ChEBI" id="CHEBI:33019"/>
        <dbReference type="ChEBI" id="CHEBI:57464"/>
        <dbReference type="ChEBI" id="CHEBI:58115"/>
        <dbReference type="ChEBI" id="CHEBI:58359"/>
        <dbReference type="ChEBI" id="CHEBI:456215"/>
        <dbReference type="EC" id="6.3.5.2"/>
    </reaction>
</comment>
<comment type="pathway">
    <text evidence="1">Purine metabolism; GMP biosynthesis; GMP from XMP (L-Gln route): step 1/1.</text>
</comment>
<comment type="subunit">
    <text evidence="1">Homodimer.</text>
</comment>
<keyword id="KW-0067">ATP-binding</keyword>
<keyword id="KW-0315">Glutamine amidotransferase</keyword>
<keyword id="KW-0332">GMP biosynthesis</keyword>
<keyword id="KW-0436">Ligase</keyword>
<keyword id="KW-0547">Nucleotide-binding</keyword>
<keyword id="KW-0658">Purine biosynthesis</keyword>
<accession>A5IPX0</accession>
<reference key="1">
    <citation type="submission" date="2007-05" db="EMBL/GenBank/DDBJ databases">
        <title>Complete sequence of chromosome of Staphylococcus aureus subsp. aureus JH9.</title>
        <authorList>
            <consortium name="US DOE Joint Genome Institute"/>
            <person name="Copeland A."/>
            <person name="Lucas S."/>
            <person name="Lapidus A."/>
            <person name="Barry K."/>
            <person name="Detter J.C."/>
            <person name="Glavina del Rio T."/>
            <person name="Hammon N."/>
            <person name="Israni S."/>
            <person name="Pitluck S."/>
            <person name="Chain P."/>
            <person name="Malfatti S."/>
            <person name="Shin M."/>
            <person name="Vergez L."/>
            <person name="Schmutz J."/>
            <person name="Larimer F."/>
            <person name="Land M."/>
            <person name="Hauser L."/>
            <person name="Kyrpides N."/>
            <person name="Kim E."/>
            <person name="Tomasz A."/>
            <person name="Richardson P."/>
        </authorList>
    </citation>
    <scope>NUCLEOTIDE SEQUENCE [LARGE SCALE GENOMIC DNA]</scope>
    <source>
        <strain>JH9</strain>
    </source>
</reference>